<name>SCX22_TITDI</name>
<proteinExistence type="evidence at protein level"/>
<keyword id="KW-0903">Direct protein sequencing</keyword>
<keyword id="KW-0872">Ion channel impairing toxin</keyword>
<keyword id="KW-0528">Neurotoxin</keyword>
<keyword id="KW-0964">Secreted</keyword>
<keyword id="KW-0800">Toxin</keyword>
<keyword id="KW-0738">Voltage-gated sodium channel impairing toxin</keyword>
<protein>
    <recommendedName>
        <fullName>Toxin TdII-2</fullName>
    </recommendedName>
</protein>
<reference key="1">
    <citation type="journal article" date="1996" name="Toxicon">
        <title>High performance liquid chromatography purification and amino acid sequence of toxins from the muscarinic fraction of Tityus discrepans scorpion venom.</title>
        <authorList>
            <person name="D'Suze G."/>
            <person name="Corona F."/>
            <person name="Possani L.D."/>
            <person name="Sevcik C."/>
        </authorList>
    </citation>
    <scope>PROTEIN SEQUENCE</scope>
    <source>
        <tissue>Venom</tissue>
    </source>
</reference>
<evidence type="ECO:0000250" key="1"/>
<evidence type="ECO:0000255" key="2">
    <source>
        <dbReference type="PROSITE-ProRule" id="PRU01210"/>
    </source>
</evidence>
<evidence type="ECO:0000305" key="3"/>
<organism>
    <name type="scientific">Tityus discrepans</name>
    <name type="common">Venezuelan scorpion</name>
    <dbReference type="NCBI Taxonomy" id="57059"/>
    <lineage>
        <taxon>Eukaryota</taxon>
        <taxon>Metazoa</taxon>
        <taxon>Ecdysozoa</taxon>
        <taxon>Arthropoda</taxon>
        <taxon>Chelicerata</taxon>
        <taxon>Arachnida</taxon>
        <taxon>Scorpiones</taxon>
        <taxon>Buthida</taxon>
        <taxon>Buthoidea</taxon>
        <taxon>Buthidae</taxon>
        <taxon>Tityus</taxon>
    </lineage>
</organism>
<feature type="chain" id="PRO_0000066821" description="Toxin TdII-2">
    <location>
        <begin position="1"/>
        <end position="13" status="greater than"/>
    </location>
</feature>
<feature type="domain" description="LCN-type CS-alpha/beta" evidence="2">
    <location>
        <begin position="1"/>
        <end position="13" status="greater than"/>
    </location>
</feature>
<feature type="non-terminal residue">
    <location>
        <position position="13"/>
    </location>
</feature>
<dbReference type="GO" id="GO:0005576">
    <property type="term" value="C:extracellular region"/>
    <property type="evidence" value="ECO:0007669"/>
    <property type="project" value="UniProtKB-SubCell"/>
</dbReference>
<dbReference type="GO" id="GO:0008200">
    <property type="term" value="F:ion channel inhibitor activity"/>
    <property type="evidence" value="ECO:0007669"/>
    <property type="project" value="InterPro"/>
</dbReference>
<dbReference type="GO" id="GO:0017080">
    <property type="term" value="F:sodium channel regulator activity"/>
    <property type="evidence" value="ECO:0007669"/>
    <property type="project" value="UniProtKB-KW"/>
</dbReference>
<dbReference type="GO" id="GO:0090729">
    <property type="term" value="F:toxin activity"/>
    <property type="evidence" value="ECO:0007669"/>
    <property type="project" value="UniProtKB-KW"/>
</dbReference>
<dbReference type="InterPro" id="IPR044062">
    <property type="entry name" value="LCN-type_CS_alpha_beta_dom"/>
</dbReference>
<dbReference type="PROSITE" id="PS51863">
    <property type="entry name" value="LCN_CSAB"/>
    <property type="match status" value="1"/>
</dbReference>
<accession>P60261</accession>
<sequence length="13" mass="1444">KDGYLPGNEGCKY</sequence>
<comment type="function">
    <text evidence="1">Beta toxins bind voltage-independently at site-4 of sodium channels (Nav) and shift the voltage of activation toward more negative potentials thereby affecting sodium channel activation and promoting spontaneous and repetitive firing (By similarity). This toxin is active against mammals and crustaceans.</text>
</comment>
<comment type="subcellular location">
    <subcellularLocation>
        <location>Secreted</location>
    </subcellularLocation>
</comment>
<comment type="tissue specificity">
    <text>Expressed by the venom gland.</text>
</comment>
<comment type="domain">
    <text evidence="3">Has the structural arrangement of an alpha-helix connected to antiparallel beta-sheets by disulfide bonds (CS-alpha/beta).</text>
</comment>
<comment type="similarity">
    <text evidence="3">Belongs to the long (4 C-C) scorpion toxin superfamily. Sodium channel inhibitor family. Beta subfamily.</text>
</comment>